<accession>B5ZB37</accession>
<organism>
    <name type="scientific">Ureaplasma urealyticum serovar 10 (strain ATCC 33699 / Western)</name>
    <dbReference type="NCBI Taxonomy" id="565575"/>
    <lineage>
        <taxon>Bacteria</taxon>
        <taxon>Bacillati</taxon>
        <taxon>Mycoplasmatota</taxon>
        <taxon>Mycoplasmoidales</taxon>
        <taxon>Mycoplasmoidaceae</taxon>
        <taxon>Ureaplasma</taxon>
    </lineage>
</organism>
<evidence type="ECO:0000255" key="1">
    <source>
        <dbReference type="HAMAP-Rule" id="MF_00514"/>
    </source>
</evidence>
<evidence type="ECO:0000305" key="2"/>
<protein>
    <recommendedName>
        <fullName evidence="1">Large ribosomal subunit protein bL35</fullName>
    </recommendedName>
    <alternativeName>
        <fullName evidence="2">50S ribosomal protein L35</fullName>
    </alternativeName>
</protein>
<keyword id="KW-0687">Ribonucleoprotein</keyword>
<keyword id="KW-0689">Ribosomal protein</keyword>
<dbReference type="EMBL" id="CP001184">
    <property type="protein sequence ID" value="ACI60288.1"/>
    <property type="molecule type" value="Genomic_DNA"/>
</dbReference>
<dbReference type="RefSeq" id="WP_004025597.1">
    <property type="nucleotide sequence ID" value="NC_011374.1"/>
</dbReference>
<dbReference type="SMR" id="B5ZB37"/>
<dbReference type="STRING" id="565575.UUR10_0223"/>
<dbReference type="GeneID" id="93848703"/>
<dbReference type="KEGG" id="uue:UUR10_0223"/>
<dbReference type="eggNOG" id="COG0291">
    <property type="taxonomic scope" value="Bacteria"/>
</dbReference>
<dbReference type="HOGENOM" id="CLU_169643_3_0_14"/>
<dbReference type="OrthoDB" id="47476at2"/>
<dbReference type="Proteomes" id="UP000002018">
    <property type="component" value="Chromosome"/>
</dbReference>
<dbReference type="GO" id="GO:0022625">
    <property type="term" value="C:cytosolic large ribosomal subunit"/>
    <property type="evidence" value="ECO:0007669"/>
    <property type="project" value="TreeGrafter"/>
</dbReference>
<dbReference type="GO" id="GO:0003735">
    <property type="term" value="F:structural constituent of ribosome"/>
    <property type="evidence" value="ECO:0007669"/>
    <property type="project" value="InterPro"/>
</dbReference>
<dbReference type="GO" id="GO:0006412">
    <property type="term" value="P:translation"/>
    <property type="evidence" value="ECO:0007669"/>
    <property type="project" value="UniProtKB-UniRule"/>
</dbReference>
<dbReference type="FunFam" id="4.10.410.60:FF:000001">
    <property type="entry name" value="50S ribosomal protein L35"/>
    <property type="match status" value="1"/>
</dbReference>
<dbReference type="Gene3D" id="4.10.410.60">
    <property type="match status" value="1"/>
</dbReference>
<dbReference type="HAMAP" id="MF_00514">
    <property type="entry name" value="Ribosomal_bL35"/>
    <property type="match status" value="1"/>
</dbReference>
<dbReference type="InterPro" id="IPR001706">
    <property type="entry name" value="Ribosomal_bL35"/>
</dbReference>
<dbReference type="InterPro" id="IPR021137">
    <property type="entry name" value="Ribosomal_bL35-like"/>
</dbReference>
<dbReference type="InterPro" id="IPR018265">
    <property type="entry name" value="Ribosomal_bL35_CS"/>
</dbReference>
<dbReference type="InterPro" id="IPR037229">
    <property type="entry name" value="Ribosomal_bL35_sf"/>
</dbReference>
<dbReference type="NCBIfam" id="TIGR00001">
    <property type="entry name" value="rpmI_bact"/>
    <property type="match status" value="1"/>
</dbReference>
<dbReference type="PANTHER" id="PTHR33343">
    <property type="entry name" value="54S RIBOSOMAL PROTEIN BL35M"/>
    <property type="match status" value="1"/>
</dbReference>
<dbReference type="PANTHER" id="PTHR33343:SF1">
    <property type="entry name" value="LARGE RIBOSOMAL SUBUNIT PROTEIN BL35M"/>
    <property type="match status" value="1"/>
</dbReference>
<dbReference type="Pfam" id="PF01632">
    <property type="entry name" value="Ribosomal_L35p"/>
    <property type="match status" value="1"/>
</dbReference>
<dbReference type="PRINTS" id="PR00064">
    <property type="entry name" value="RIBOSOMALL35"/>
</dbReference>
<dbReference type="SUPFAM" id="SSF143034">
    <property type="entry name" value="L35p-like"/>
    <property type="match status" value="1"/>
</dbReference>
<dbReference type="PROSITE" id="PS00936">
    <property type="entry name" value="RIBOSOMAL_L35"/>
    <property type="match status" value="1"/>
</dbReference>
<gene>
    <name evidence="1" type="primary">rpmI</name>
    <name type="ordered locus">UUR10_0223</name>
</gene>
<reference key="1">
    <citation type="submission" date="2008-10" db="EMBL/GenBank/DDBJ databases">
        <title>Genome sequence of Ureaplasma urealyticum serovar 10 ATCC-33699.</title>
        <authorList>
            <person name="Shrivastava S."/>
            <person name="Methe B.A."/>
            <person name="Glass J."/>
            <person name="White K."/>
            <person name="Duffy L.B."/>
        </authorList>
    </citation>
    <scope>NUCLEOTIDE SEQUENCE [LARGE SCALE GENOMIC DNA]</scope>
    <source>
        <strain>ATCC 33699 / Western</strain>
    </source>
</reference>
<feature type="chain" id="PRO_1000127424" description="Large ribosomal subunit protein bL35">
    <location>
        <begin position="1"/>
        <end position="64"/>
    </location>
</feature>
<comment type="similarity">
    <text evidence="1">Belongs to the bacterial ribosomal protein bL35 family.</text>
</comment>
<sequence>MAKIRQKTKRAAAKRFSITKNGKLKRKHAYRSHLALGRSTKAKRHLRKDAIMSTSDTKRYTQCL</sequence>
<name>RL35_UREU1</name>
<proteinExistence type="inferred from homology"/>